<proteinExistence type="inferred from homology"/>
<comment type="function">
    <text evidence="1">Catalyzes the reversible transfer of a formyl group from formylmethanofuran (formyl-MFR) to tetrahydromethanopterin (H(4)MPT) to produce 5-formyl tetrahydromethanopterin (5-formyl-H(4)MPT) and methanofuran (MFR).</text>
</comment>
<comment type="catalytic activity">
    <reaction evidence="1">
        <text>N-formylmethanofuran + 5,6,7,8-tetrahydromethanopterin + H(+) = N(5)-formyl-5,6,7,8-tetrahydromethanopterin + methanofuran</text>
        <dbReference type="Rhea" id="RHEA:18061"/>
        <dbReference type="ChEBI" id="CHEBI:15378"/>
        <dbReference type="ChEBI" id="CHEBI:57727"/>
        <dbReference type="ChEBI" id="CHEBI:58018"/>
        <dbReference type="ChEBI" id="CHEBI:58103"/>
        <dbReference type="ChEBI" id="CHEBI:58151"/>
        <dbReference type="EC" id="2.3.1.101"/>
    </reaction>
</comment>
<comment type="pathway">
    <text evidence="1">One-carbon metabolism; methanogenesis from CO(2); 5,10-methenyl-5,6,7,8-tetrahydromethanopterin from CO(2): step 2/3.</text>
</comment>
<comment type="subunit">
    <text evidence="1">Homotetramer.</text>
</comment>
<comment type="subcellular location">
    <subcellularLocation>
        <location evidence="1">Cytoplasm</location>
    </subcellularLocation>
</comment>
<comment type="similarity">
    <text evidence="1">Belongs to the FTR family.</text>
</comment>
<name>FTR_METBU</name>
<reference key="1">
    <citation type="journal article" date="2009" name="ISME J.">
        <title>The genome sequence of the psychrophilic archaeon, Methanococcoides burtonii: the role of genome evolution in cold adaptation.</title>
        <authorList>
            <person name="Allen M.A."/>
            <person name="Lauro F.M."/>
            <person name="Williams T.J."/>
            <person name="Burg D."/>
            <person name="Siddiqui K.S."/>
            <person name="De Francisci D."/>
            <person name="Chong K.W."/>
            <person name="Pilak O."/>
            <person name="Chew H.H."/>
            <person name="De Maere M.Z."/>
            <person name="Ting L."/>
            <person name="Katrib M."/>
            <person name="Ng C."/>
            <person name="Sowers K.R."/>
            <person name="Galperin M.Y."/>
            <person name="Anderson I.J."/>
            <person name="Ivanova N."/>
            <person name="Dalin E."/>
            <person name="Martinez M."/>
            <person name="Lapidus A."/>
            <person name="Hauser L."/>
            <person name="Land M."/>
            <person name="Thomas T."/>
            <person name="Cavicchioli R."/>
        </authorList>
    </citation>
    <scope>NUCLEOTIDE SEQUENCE [LARGE SCALE GENOMIC DNA]</scope>
    <source>
        <strain>DSM 6242 / NBRC 107633 / OCM 468 / ACE-M</strain>
    </source>
</reference>
<feature type="chain" id="PRO_1000025194" description="Formylmethanofuran--tetrahydromethanopterin formyltransferase">
    <location>
        <begin position="1"/>
        <end position="297"/>
    </location>
</feature>
<accession>Q12VA6</accession>
<sequence length="297" mass="31444">MELNGVEIEDTFAEAFPIKISRILITAATKRWATVAAQEATGFGTSVIGCPAEAGIEKYADASETPDGRPGVYIQFCTFGFKSLEEQLLERVGQCILTAPTTAVFNGLPDAEKQFDTGRKLKYFADGTESETEVGGRKMHVIPMMEGDFLVEDTLGAVTAIAGGNFFIFGDTQMTTLTAAENAVDAIGAVDGTITPFPGGIVASGSKAGANKYKFLKATANEKFCPSIKDKVEGSEIPADVNCVYEIVINGLDFESIAKATEMGIRAAVAVPGIKKITAGNYGGSLGPHKFNLHDLF</sequence>
<dbReference type="EC" id="2.3.1.101" evidence="1"/>
<dbReference type="EMBL" id="CP000300">
    <property type="protein sequence ID" value="ABE52620.1"/>
    <property type="molecule type" value="Genomic_DNA"/>
</dbReference>
<dbReference type="RefSeq" id="WP_011499763.1">
    <property type="nucleotide sequence ID" value="NC_007955.1"/>
</dbReference>
<dbReference type="SMR" id="Q12VA6"/>
<dbReference type="STRING" id="259564.Mbur_1728"/>
<dbReference type="GeneID" id="3997403"/>
<dbReference type="KEGG" id="mbu:Mbur_1728"/>
<dbReference type="HOGENOM" id="CLU_081314_0_0_2"/>
<dbReference type="OrthoDB" id="81373at2157"/>
<dbReference type="UniPathway" id="UPA00640">
    <property type="reaction ID" value="UER00693"/>
</dbReference>
<dbReference type="Proteomes" id="UP000001979">
    <property type="component" value="Chromosome"/>
</dbReference>
<dbReference type="GO" id="GO:0005737">
    <property type="term" value="C:cytoplasm"/>
    <property type="evidence" value="ECO:0007669"/>
    <property type="project" value="UniProtKB-SubCell"/>
</dbReference>
<dbReference type="GO" id="GO:0030270">
    <property type="term" value="F:formylmethanofuran-tetrahydromethanopterin N-formyltransferase activity"/>
    <property type="evidence" value="ECO:0007669"/>
    <property type="project" value="UniProtKB-UniRule"/>
</dbReference>
<dbReference type="GO" id="GO:0019386">
    <property type="term" value="P:methanogenesis, from carbon dioxide"/>
    <property type="evidence" value="ECO:0007669"/>
    <property type="project" value="UniProtKB-UniRule"/>
</dbReference>
<dbReference type="GO" id="GO:0006730">
    <property type="term" value="P:one-carbon metabolic process"/>
    <property type="evidence" value="ECO:0007669"/>
    <property type="project" value="UniProtKB-UniRule"/>
</dbReference>
<dbReference type="Gene3D" id="3.30.70.520">
    <property type="match status" value="2"/>
</dbReference>
<dbReference type="HAMAP" id="MF_00579">
    <property type="entry name" value="FTR"/>
    <property type="match status" value="1"/>
</dbReference>
<dbReference type="InterPro" id="IPR014053">
    <property type="entry name" value="ForMFR_H4MPT_ForTrfase"/>
</dbReference>
<dbReference type="InterPro" id="IPR002770">
    <property type="entry name" value="ForMFR_H4MPT_ForTrfase_C"/>
</dbReference>
<dbReference type="InterPro" id="IPR023447">
    <property type="entry name" value="ForMFR_H4MPT_ForTrfase_fd-like"/>
</dbReference>
<dbReference type="InterPro" id="IPR022667">
    <property type="entry name" value="ForMFR_H4MPT_ForTrfase_N"/>
</dbReference>
<dbReference type="NCBIfam" id="TIGR03119">
    <property type="entry name" value="one_C_fhcD"/>
    <property type="match status" value="1"/>
</dbReference>
<dbReference type="NCBIfam" id="NF002554">
    <property type="entry name" value="PRK02114.1"/>
    <property type="match status" value="1"/>
</dbReference>
<dbReference type="Pfam" id="PF01913">
    <property type="entry name" value="FTR"/>
    <property type="match status" value="1"/>
</dbReference>
<dbReference type="Pfam" id="PF02741">
    <property type="entry name" value="FTR_C"/>
    <property type="match status" value="1"/>
</dbReference>
<dbReference type="PIRSF" id="PIRSF006414">
    <property type="entry name" value="Ftr_formyl_trnsf"/>
    <property type="match status" value="1"/>
</dbReference>
<dbReference type="SUPFAM" id="SSF55112">
    <property type="entry name" value="Formylmethanofuran:tetrahydromethanopterin formyltransferase"/>
    <property type="match status" value="2"/>
</dbReference>
<evidence type="ECO:0000255" key="1">
    <source>
        <dbReference type="HAMAP-Rule" id="MF_00579"/>
    </source>
</evidence>
<gene>
    <name evidence="1" type="primary">ftr</name>
    <name type="ordered locus">Mbur_1728</name>
</gene>
<protein>
    <recommendedName>
        <fullName evidence="1">Formylmethanofuran--tetrahydromethanopterin formyltransferase</fullName>
        <shortName evidence="1">Ftr</shortName>
        <ecNumber evidence="1">2.3.1.101</ecNumber>
    </recommendedName>
    <alternativeName>
        <fullName evidence="1">H4MPT formyltransferase</fullName>
    </alternativeName>
</protein>
<keyword id="KW-0012">Acyltransferase</keyword>
<keyword id="KW-0963">Cytoplasm</keyword>
<keyword id="KW-0484">Methanogenesis</keyword>
<keyword id="KW-0554">One-carbon metabolism</keyword>
<keyword id="KW-0808">Transferase</keyword>
<organism>
    <name type="scientific">Methanococcoides burtonii (strain DSM 6242 / NBRC 107633 / OCM 468 / ACE-M)</name>
    <dbReference type="NCBI Taxonomy" id="259564"/>
    <lineage>
        <taxon>Archaea</taxon>
        <taxon>Methanobacteriati</taxon>
        <taxon>Methanobacteriota</taxon>
        <taxon>Stenosarchaea group</taxon>
        <taxon>Methanomicrobia</taxon>
        <taxon>Methanosarcinales</taxon>
        <taxon>Methanosarcinaceae</taxon>
        <taxon>Methanococcoides</taxon>
    </lineage>
</organism>